<protein>
    <recommendedName>
        <fullName evidence="1">Chaperone modulatory protein CbpM</fullName>
    </recommendedName>
</protein>
<sequence length="101" mass="11512">MANVTVTFTITEFCLHTGISEEELNEIVGLGVVEPREIQETTWVFDDHAAIVVQRAVRLRHELALDWPGIAVALTLMDDIAHLKQENRLLRQRLSRFVAHP</sequence>
<reference key="1">
    <citation type="submission" date="2008-05" db="EMBL/GenBank/DDBJ databases">
        <title>Complete sequence of Shigella boydii serotype 18 strain BS512.</title>
        <authorList>
            <person name="Rasko D.A."/>
            <person name="Rosovitz M."/>
            <person name="Maurelli A.T."/>
            <person name="Myers G."/>
            <person name="Seshadri R."/>
            <person name="Cer R."/>
            <person name="Jiang L."/>
            <person name="Ravel J."/>
            <person name="Sebastian Y."/>
        </authorList>
    </citation>
    <scope>NUCLEOTIDE SEQUENCE [LARGE SCALE GENOMIC DNA]</scope>
    <source>
        <strain>CDC 3083-94 / BS512</strain>
    </source>
</reference>
<proteinExistence type="inferred from homology"/>
<organism>
    <name type="scientific">Shigella boydii serotype 18 (strain CDC 3083-94 / BS512)</name>
    <dbReference type="NCBI Taxonomy" id="344609"/>
    <lineage>
        <taxon>Bacteria</taxon>
        <taxon>Pseudomonadati</taxon>
        <taxon>Pseudomonadota</taxon>
        <taxon>Gammaproteobacteria</taxon>
        <taxon>Enterobacterales</taxon>
        <taxon>Enterobacteriaceae</taxon>
        <taxon>Shigella</taxon>
    </lineage>
</organism>
<accession>B2TTP9</accession>
<feature type="chain" id="PRO_1000137783" description="Chaperone modulatory protein CbpM">
    <location>
        <begin position="1"/>
        <end position="101"/>
    </location>
</feature>
<name>CBPM_SHIB3</name>
<dbReference type="EMBL" id="CP001063">
    <property type="protein sequence ID" value="ACD09316.1"/>
    <property type="molecule type" value="Genomic_DNA"/>
</dbReference>
<dbReference type="RefSeq" id="WP_000024560.1">
    <property type="nucleotide sequence ID" value="NC_010658.1"/>
</dbReference>
<dbReference type="SMR" id="B2TTP9"/>
<dbReference type="STRING" id="344609.SbBS512_E2315"/>
<dbReference type="GeneID" id="93776412"/>
<dbReference type="KEGG" id="sbc:SbBS512_E2315"/>
<dbReference type="HOGENOM" id="CLU_144710_3_1_6"/>
<dbReference type="Proteomes" id="UP000001030">
    <property type="component" value="Chromosome"/>
</dbReference>
<dbReference type="FunFam" id="1.10.1660.10:FF:000006">
    <property type="entry name" value="Chaperone modulatory protein CbpM"/>
    <property type="match status" value="1"/>
</dbReference>
<dbReference type="Gene3D" id="1.10.1660.10">
    <property type="match status" value="1"/>
</dbReference>
<dbReference type="HAMAP" id="MF_01155">
    <property type="entry name" value="CbpM"/>
    <property type="match status" value="1"/>
</dbReference>
<dbReference type="InterPro" id="IPR022835">
    <property type="entry name" value="CbpM"/>
</dbReference>
<dbReference type="NCBIfam" id="NF007617">
    <property type="entry name" value="PRK10265.1"/>
    <property type="match status" value="1"/>
</dbReference>
<dbReference type="Pfam" id="PF13591">
    <property type="entry name" value="MerR_2"/>
    <property type="match status" value="1"/>
</dbReference>
<evidence type="ECO:0000255" key="1">
    <source>
        <dbReference type="HAMAP-Rule" id="MF_01155"/>
    </source>
</evidence>
<comment type="function">
    <text evidence="1">Interacts with CbpA and inhibits both the DnaJ-like co-chaperone activity and the DNA binding activity of CbpA. Together with CbpA, modulates the activity of the DnaK chaperone system. Does not inhibit the co-chaperone activity of DnaJ.</text>
</comment>
<comment type="similarity">
    <text evidence="1">Belongs to the CbpM family.</text>
</comment>
<keyword id="KW-1185">Reference proteome</keyword>
<gene>
    <name evidence="1" type="primary">cbpM</name>
    <name type="ordered locus">SbBS512_E2315</name>
</gene>